<keyword id="KW-0027">Amidation</keyword>
<keyword id="KW-0208">D-amino acid</keyword>
<keyword id="KW-1015">Disulfide bond</keyword>
<keyword id="KW-0872">Ion channel impairing toxin</keyword>
<keyword id="KW-0528">Neurotoxin</keyword>
<keyword id="KW-0964">Secreted</keyword>
<keyword id="KW-0732">Signal</keyword>
<keyword id="KW-0800">Toxin</keyword>
<protein>
    <recommendedName>
        <fullName evidence="8">Contryphan-Lo2</fullName>
    </recommendedName>
    <alternativeName>
        <fullName evidence="9">Lo1158</fullName>
    </alternativeName>
</protein>
<feature type="signal peptide" evidence="5">
    <location>
        <begin position="1"/>
        <end position="19"/>
    </location>
</feature>
<feature type="propeptide" id="PRO_0000445134" evidence="8">
    <location>
        <begin position="20"/>
        <end position="50"/>
    </location>
</feature>
<feature type="peptide" id="PRO_5012433346" description="Contryphan-Lo2" evidence="7">
    <location>
        <begin position="51"/>
        <end position="59"/>
    </location>
</feature>
<feature type="region of interest" description="Disordered" evidence="6">
    <location>
        <begin position="25"/>
        <end position="45"/>
    </location>
</feature>
<feature type="compositionally biased region" description="Basic and acidic residues" evidence="6">
    <location>
        <begin position="25"/>
        <end position="35"/>
    </location>
</feature>
<feature type="modified residue" description="D-tryptophan" evidence="9">
    <location>
        <position position="55"/>
    </location>
</feature>
<feature type="modified residue" description="D-tryptophan" evidence="9">
    <location>
        <position position="58"/>
    </location>
</feature>
<feature type="modified residue" description="Cysteine amide" evidence="7">
    <location>
        <position position="59"/>
    </location>
</feature>
<feature type="disulfide bond" evidence="7">
    <location>
        <begin position="53"/>
        <end position="59"/>
    </location>
</feature>
<comment type="function">
    <text evidence="1 2 3 4">Its target is unknown, but this toxin may modulate voltage-activated calcium channels (Cav) or calcium-dependent potassium channels (KCa).</text>
</comment>
<comment type="subcellular location">
    <subcellularLocation>
        <location evidence="7">Secreted</location>
    </subcellularLocation>
</comment>
<comment type="tissue specificity">
    <text evidence="9">Expressed by the venom duct.</text>
</comment>
<comment type="domain">
    <text evidence="8">The cysteine framework is C-C.</text>
</comment>
<comment type="mass spectrometry" mass="1158.44" method="MALDI" evidence="7">
    <text>Monoisotopic mass.</text>
</comment>
<comment type="similarity">
    <text evidence="8">Belongs to the O2 superfamily. Contryphan family.</text>
</comment>
<organism>
    <name type="scientific">Conus buxeus loroisii</name>
    <name type="common">Cone snail</name>
    <name type="synonym">Conus loroisii</name>
    <dbReference type="NCBI Taxonomy" id="410709"/>
    <lineage>
        <taxon>Eukaryota</taxon>
        <taxon>Metazoa</taxon>
        <taxon>Spiralia</taxon>
        <taxon>Lophotrochozoa</taxon>
        <taxon>Mollusca</taxon>
        <taxon>Gastropoda</taxon>
        <taxon>Caenogastropoda</taxon>
        <taxon>Neogastropoda</taxon>
        <taxon>Conoidea</taxon>
        <taxon>Conidae</taxon>
        <taxon>Conus</taxon>
        <taxon>Dendroconus</taxon>
    </lineage>
</organism>
<name>COW2_CONBL</name>
<evidence type="ECO:0000250" key="1">
    <source>
        <dbReference type="UniProtKB" id="P0C248"/>
    </source>
</evidence>
<evidence type="ECO:0000250" key="2">
    <source>
        <dbReference type="UniProtKB" id="P0C250"/>
    </source>
</evidence>
<evidence type="ECO:0000250" key="3">
    <source>
        <dbReference type="UniProtKB" id="P62903"/>
    </source>
</evidence>
<evidence type="ECO:0000250" key="4">
    <source>
        <dbReference type="UniProtKB" id="P83047"/>
    </source>
</evidence>
<evidence type="ECO:0000255" key="5"/>
<evidence type="ECO:0000256" key="6">
    <source>
        <dbReference type="SAM" id="MobiDB-lite"/>
    </source>
</evidence>
<evidence type="ECO:0000269" key="7">
    <source>
    </source>
</evidence>
<evidence type="ECO:0000305" key="8"/>
<evidence type="ECO:0000305" key="9">
    <source>
    </source>
</evidence>
<reference key="1">
    <citation type="journal article" date="2017" name="J. Proteome Res.">
        <title>Contryphan genes and mature peptides in the venom of nine cone snail species by transcriptomic and mass spectrometric analysis.</title>
        <authorList>
            <person name="Vijayasarathy M."/>
            <person name="Basheer S.M."/>
            <person name="Franklin J.B."/>
            <person name="Balaram P."/>
        </authorList>
    </citation>
    <scope>NUCLEOTIDE SEQUENCE [MRNA]</scope>
    <scope>MASS SPECTROMETRY</scope>
    <scope>SUBCELLULAR LOCATION</scope>
    <scope>AMIDATION AT CYS-59</scope>
    <scope>D-AMINO ACID AT TRP-55 AND TRP-58</scope>
    <scope>DISULFIDE BOND</scope>
    <source>
        <tissue>Venom</tissue>
        <tissue>Venom duct</tissue>
    </source>
</reference>
<dbReference type="EMBL" id="KX289885">
    <property type="protein sequence ID" value="APX52862.1"/>
    <property type="molecule type" value="mRNA"/>
</dbReference>
<dbReference type="ConoServer" id="9764">
    <property type="toxin name" value="Contryphan-Lo2 precursor"/>
</dbReference>
<dbReference type="GO" id="GO:0005576">
    <property type="term" value="C:extracellular region"/>
    <property type="evidence" value="ECO:0007669"/>
    <property type="project" value="UniProtKB-SubCell"/>
</dbReference>
<dbReference type="GO" id="GO:0008200">
    <property type="term" value="F:ion channel inhibitor activity"/>
    <property type="evidence" value="ECO:0007669"/>
    <property type="project" value="InterPro"/>
</dbReference>
<dbReference type="GO" id="GO:0090729">
    <property type="term" value="F:toxin activity"/>
    <property type="evidence" value="ECO:0007669"/>
    <property type="project" value="UniProtKB-KW"/>
</dbReference>
<dbReference type="InterPro" id="IPR004214">
    <property type="entry name" value="Conotoxin"/>
</dbReference>
<dbReference type="InterPro" id="IPR011062">
    <property type="entry name" value="Contryphan_CS"/>
</dbReference>
<dbReference type="Pfam" id="PF02950">
    <property type="entry name" value="Conotoxin"/>
    <property type="match status" value="1"/>
</dbReference>
<dbReference type="PROSITE" id="PS60027">
    <property type="entry name" value="CONTRYPHAN"/>
    <property type="match status" value="1"/>
</dbReference>
<sequence length="60" mass="6598">MGKLTILVLVAAVLLSTQAMVQDQPADRNAVRRNDNPGGASRKSINVLHRNECPWQPWCG</sequence>
<accession>A0A1P8NVU0</accession>
<proteinExistence type="evidence at protein level"/>